<sequence>MKNQLIDRLTRYTTIDTQSDPKSTTTPSTEKQWDLLHLLEKELQQLGLPTDLDENGYLFATLESNIDVDVPTVGFLAHVDTSPDFNASNVKPQIIENYDGKPYKLGNTKRVLDPKVFPELNSLVGHTLMVTDGTSLLGADDKAGIVEIMEAICYLQEHPEIKHGTIRIGFTPDEEIGRGPHKFDVDRFNADFAYTMDGSQYGELQYESFNAAEAVITCHGVNVHPGSAKNAMVNAIRLGEQFDSLLPDSEVPERTEGYEGFYHLMNFEGTVEKATLQYIIRDHDKKQFELRKKRILEIRDDINAHFENYPVKVDISDQYFNMAEKILPLPHIIDIPKRVFAKLDIPANTEPIRGGTDGSQLSFMGLPTPNIFTGCGNFHGPYEYASIDVMEKAVQVIIGIVEDIAENH</sequence>
<name>PEPT_STAAE</name>
<gene>
    <name evidence="1" type="primary">pepT</name>
    <name type="ordered locus">NWMN_0712</name>
</gene>
<dbReference type="EC" id="3.4.11.4" evidence="1"/>
<dbReference type="EMBL" id="AP009351">
    <property type="protein sequence ID" value="BAF66984.1"/>
    <property type="molecule type" value="Genomic_DNA"/>
</dbReference>
<dbReference type="RefSeq" id="WP_000795826.1">
    <property type="nucleotide sequence ID" value="NZ_JBBIAE010000002.1"/>
</dbReference>
<dbReference type="SMR" id="A6QF52"/>
<dbReference type="MEROPS" id="M20.003"/>
<dbReference type="KEGG" id="sae:NWMN_0712"/>
<dbReference type="HOGENOM" id="CLU_053676_0_0_9"/>
<dbReference type="Proteomes" id="UP000006386">
    <property type="component" value="Chromosome"/>
</dbReference>
<dbReference type="GO" id="GO:0005829">
    <property type="term" value="C:cytosol"/>
    <property type="evidence" value="ECO:0007669"/>
    <property type="project" value="TreeGrafter"/>
</dbReference>
<dbReference type="GO" id="GO:0008237">
    <property type="term" value="F:metallopeptidase activity"/>
    <property type="evidence" value="ECO:0007669"/>
    <property type="project" value="UniProtKB-KW"/>
</dbReference>
<dbReference type="GO" id="GO:0045148">
    <property type="term" value="F:tripeptide aminopeptidase activity"/>
    <property type="evidence" value="ECO:0007669"/>
    <property type="project" value="UniProtKB-UniRule"/>
</dbReference>
<dbReference type="GO" id="GO:0008270">
    <property type="term" value="F:zinc ion binding"/>
    <property type="evidence" value="ECO:0007669"/>
    <property type="project" value="UniProtKB-UniRule"/>
</dbReference>
<dbReference type="GO" id="GO:0043171">
    <property type="term" value="P:peptide catabolic process"/>
    <property type="evidence" value="ECO:0007669"/>
    <property type="project" value="UniProtKB-UniRule"/>
</dbReference>
<dbReference type="GO" id="GO:0006508">
    <property type="term" value="P:proteolysis"/>
    <property type="evidence" value="ECO:0007669"/>
    <property type="project" value="UniProtKB-UniRule"/>
</dbReference>
<dbReference type="CDD" id="cd03892">
    <property type="entry name" value="M20_peptT"/>
    <property type="match status" value="1"/>
</dbReference>
<dbReference type="FunFam" id="3.30.70.360:FF:000002">
    <property type="entry name" value="Peptidase T"/>
    <property type="match status" value="1"/>
</dbReference>
<dbReference type="Gene3D" id="3.30.70.360">
    <property type="match status" value="1"/>
</dbReference>
<dbReference type="Gene3D" id="3.40.630.10">
    <property type="entry name" value="Zn peptidases"/>
    <property type="match status" value="1"/>
</dbReference>
<dbReference type="HAMAP" id="MF_00550">
    <property type="entry name" value="Aminopeptidase_M20"/>
    <property type="match status" value="1"/>
</dbReference>
<dbReference type="InterPro" id="IPR001261">
    <property type="entry name" value="ArgE/DapE_CS"/>
</dbReference>
<dbReference type="InterPro" id="IPR036264">
    <property type="entry name" value="Bact_exopeptidase_dim_dom"/>
</dbReference>
<dbReference type="InterPro" id="IPR002933">
    <property type="entry name" value="Peptidase_M20"/>
</dbReference>
<dbReference type="InterPro" id="IPR011650">
    <property type="entry name" value="Peptidase_M20_dimer"/>
</dbReference>
<dbReference type="InterPro" id="IPR010161">
    <property type="entry name" value="Peptidase_M20B"/>
</dbReference>
<dbReference type="NCBIfam" id="TIGR01882">
    <property type="entry name" value="peptidase-T"/>
    <property type="match status" value="1"/>
</dbReference>
<dbReference type="NCBIfam" id="NF003976">
    <property type="entry name" value="PRK05469.1"/>
    <property type="match status" value="1"/>
</dbReference>
<dbReference type="NCBIfam" id="NF009920">
    <property type="entry name" value="PRK13381.1"/>
    <property type="match status" value="1"/>
</dbReference>
<dbReference type="PANTHER" id="PTHR42994">
    <property type="entry name" value="PEPTIDASE T"/>
    <property type="match status" value="1"/>
</dbReference>
<dbReference type="PANTHER" id="PTHR42994:SF1">
    <property type="entry name" value="PEPTIDASE T"/>
    <property type="match status" value="1"/>
</dbReference>
<dbReference type="Pfam" id="PF07687">
    <property type="entry name" value="M20_dimer"/>
    <property type="match status" value="1"/>
</dbReference>
<dbReference type="Pfam" id="PF01546">
    <property type="entry name" value="Peptidase_M20"/>
    <property type="match status" value="1"/>
</dbReference>
<dbReference type="PIRSF" id="PIRSF037215">
    <property type="entry name" value="Peptidase_M20B"/>
    <property type="match status" value="1"/>
</dbReference>
<dbReference type="SUPFAM" id="SSF55031">
    <property type="entry name" value="Bacterial exopeptidase dimerisation domain"/>
    <property type="match status" value="1"/>
</dbReference>
<dbReference type="SUPFAM" id="SSF53187">
    <property type="entry name" value="Zn-dependent exopeptidases"/>
    <property type="match status" value="1"/>
</dbReference>
<dbReference type="PROSITE" id="PS00758">
    <property type="entry name" value="ARGE_DAPE_CPG2_1"/>
    <property type="match status" value="1"/>
</dbReference>
<dbReference type="PROSITE" id="PS00759">
    <property type="entry name" value="ARGE_DAPE_CPG2_2"/>
    <property type="match status" value="1"/>
</dbReference>
<feature type="chain" id="PRO_1000072555" description="Peptidase T">
    <location>
        <begin position="1"/>
        <end position="408"/>
    </location>
</feature>
<feature type="region of interest" description="Disordered" evidence="2">
    <location>
        <begin position="1"/>
        <end position="28"/>
    </location>
</feature>
<feature type="compositionally biased region" description="Polar residues" evidence="2">
    <location>
        <begin position="11"/>
        <end position="28"/>
    </location>
</feature>
<feature type="active site" evidence="1">
    <location>
        <position position="80"/>
    </location>
</feature>
<feature type="active site" description="Proton acceptor" evidence="1">
    <location>
        <position position="174"/>
    </location>
</feature>
<feature type="binding site" evidence="1">
    <location>
        <position position="78"/>
    </location>
    <ligand>
        <name>Zn(2+)</name>
        <dbReference type="ChEBI" id="CHEBI:29105"/>
        <label>1</label>
    </ligand>
</feature>
<feature type="binding site" evidence="1">
    <location>
        <position position="140"/>
    </location>
    <ligand>
        <name>Zn(2+)</name>
        <dbReference type="ChEBI" id="CHEBI:29105"/>
        <label>1</label>
    </ligand>
</feature>
<feature type="binding site" evidence="1">
    <location>
        <position position="140"/>
    </location>
    <ligand>
        <name>Zn(2+)</name>
        <dbReference type="ChEBI" id="CHEBI:29105"/>
        <label>2</label>
    </ligand>
</feature>
<feature type="binding site" evidence="1">
    <location>
        <position position="175"/>
    </location>
    <ligand>
        <name>Zn(2+)</name>
        <dbReference type="ChEBI" id="CHEBI:29105"/>
        <label>2</label>
    </ligand>
</feature>
<feature type="binding site" evidence="1">
    <location>
        <position position="197"/>
    </location>
    <ligand>
        <name>Zn(2+)</name>
        <dbReference type="ChEBI" id="CHEBI:29105"/>
        <label>1</label>
    </ligand>
</feature>
<feature type="binding site" evidence="1">
    <location>
        <position position="379"/>
    </location>
    <ligand>
        <name>Zn(2+)</name>
        <dbReference type="ChEBI" id="CHEBI:29105"/>
        <label>2</label>
    </ligand>
</feature>
<comment type="function">
    <text evidence="1">Cleaves the N-terminal amino acid of tripeptides.</text>
</comment>
<comment type="catalytic activity">
    <reaction evidence="1">
        <text>Release of the N-terminal residue from a tripeptide.</text>
        <dbReference type="EC" id="3.4.11.4"/>
    </reaction>
</comment>
<comment type="cofactor">
    <cofactor evidence="1">
        <name>Zn(2+)</name>
        <dbReference type="ChEBI" id="CHEBI:29105"/>
    </cofactor>
    <text evidence="1">Binds 2 Zn(2+) ions per subunit.</text>
</comment>
<comment type="subcellular location">
    <subcellularLocation>
        <location evidence="1">Cytoplasm</location>
    </subcellularLocation>
</comment>
<comment type="similarity">
    <text evidence="1">Belongs to the peptidase M20B family.</text>
</comment>
<proteinExistence type="inferred from homology"/>
<keyword id="KW-0031">Aminopeptidase</keyword>
<keyword id="KW-0963">Cytoplasm</keyword>
<keyword id="KW-0378">Hydrolase</keyword>
<keyword id="KW-0479">Metal-binding</keyword>
<keyword id="KW-0482">Metalloprotease</keyword>
<keyword id="KW-0645">Protease</keyword>
<keyword id="KW-0862">Zinc</keyword>
<organism>
    <name type="scientific">Staphylococcus aureus (strain Newman)</name>
    <dbReference type="NCBI Taxonomy" id="426430"/>
    <lineage>
        <taxon>Bacteria</taxon>
        <taxon>Bacillati</taxon>
        <taxon>Bacillota</taxon>
        <taxon>Bacilli</taxon>
        <taxon>Bacillales</taxon>
        <taxon>Staphylococcaceae</taxon>
        <taxon>Staphylococcus</taxon>
    </lineage>
</organism>
<accession>A6QF52</accession>
<evidence type="ECO:0000255" key="1">
    <source>
        <dbReference type="HAMAP-Rule" id="MF_00550"/>
    </source>
</evidence>
<evidence type="ECO:0000256" key="2">
    <source>
        <dbReference type="SAM" id="MobiDB-lite"/>
    </source>
</evidence>
<protein>
    <recommendedName>
        <fullName evidence="1">Peptidase T</fullName>
        <ecNumber evidence="1">3.4.11.4</ecNumber>
    </recommendedName>
    <alternativeName>
        <fullName evidence="1">Aminotripeptidase</fullName>
        <shortName evidence="1">Tripeptidase</shortName>
    </alternativeName>
    <alternativeName>
        <fullName evidence="1">Tripeptide aminopeptidase</fullName>
    </alternativeName>
</protein>
<reference key="1">
    <citation type="journal article" date="2008" name="J. Bacteriol.">
        <title>Genome sequence of Staphylococcus aureus strain Newman and comparative analysis of staphylococcal genomes: polymorphism and evolution of two major pathogenicity islands.</title>
        <authorList>
            <person name="Baba T."/>
            <person name="Bae T."/>
            <person name="Schneewind O."/>
            <person name="Takeuchi F."/>
            <person name="Hiramatsu K."/>
        </authorList>
    </citation>
    <scope>NUCLEOTIDE SEQUENCE [LARGE SCALE GENOMIC DNA]</scope>
    <source>
        <strain>Newman</strain>
    </source>
</reference>